<organism>
    <name type="scientific">Parasynechococcus marenigrum (strain WH8102)</name>
    <dbReference type="NCBI Taxonomy" id="84588"/>
    <lineage>
        <taxon>Bacteria</taxon>
        <taxon>Bacillati</taxon>
        <taxon>Cyanobacteriota</taxon>
        <taxon>Cyanophyceae</taxon>
        <taxon>Synechococcales</taxon>
        <taxon>Prochlorococcaceae</taxon>
        <taxon>Parasynechococcus</taxon>
        <taxon>Parasynechococcus marenigrum</taxon>
    </lineage>
</organism>
<name>NDHM_PARMW</name>
<accession>Q7U417</accession>
<evidence type="ECO:0000255" key="1">
    <source>
        <dbReference type="HAMAP-Rule" id="MF_01352"/>
    </source>
</evidence>
<comment type="function">
    <text evidence="1">NDH-1 shuttles electrons from an unknown electron donor, via FMN and iron-sulfur (Fe-S) centers, to quinones in the respiratory and/or the photosynthetic chain. The immediate electron acceptor for the enzyme in this species is believed to be plastoquinone. Couples the redox reaction to proton translocation, and thus conserves the redox energy in a proton gradient. Cyanobacterial NDH-1 also plays a role in inorganic carbon-concentration.</text>
</comment>
<comment type="catalytic activity">
    <reaction evidence="1">
        <text>a plastoquinone + NADH + (n+1) H(+)(in) = a plastoquinol + NAD(+) + n H(+)(out)</text>
        <dbReference type="Rhea" id="RHEA:42608"/>
        <dbReference type="Rhea" id="RHEA-COMP:9561"/>
        <dbReference type="Rhea" id="RHEA-COMP:9562"/>
        <dbReference type="ChEBI" id="CHEBI:15378"/>
        <dbReference type="ChEBI" id="CHEBI:17757"/>
        <dbReference type="ChEBI" id="CHEBI:57540"/>
        <dbReference type="ChEBI" id="CHEBI:57945"/>
        <dbReference type="ChEBI" id="CHEBI:62192"/>
    </reaction>
</comment>
<comment type="catalytic activity">
    <reaction evidence="1">
        <text>a plastoquinone + NADPH + (n+1) H(+)(in) = a plastoquinol + NADP(+) + n H(+)(out)</text>
        <dbReference type="Rhea" id="RHEA:42612"/>
        <dbReference type="Rhea" id="RHEA-COMP:9561"/>
        <dbReference type="Rhea" id="RHEA-COMP:9562"/>
        <dbReference type="ChEBI" id="CHEBI:15378"/>
        <dbReference type="ChEBI" id="CHEBI:17757"/>
        <dbReference type="ChEBI" id="CHEBI:57783"/>
        <dbReference type="ChEBI" id="CHEBI:58349"/>
        <dbReference type="ChEBI" id="CHEBI:62192"/>
    </reaction>
</comment>
<comment type="subunit">
    <text evidence="1">NDH-1 can be composed of about 15 different subunits; different subcomplexes with different compositions have been identified which probably have different functions.</text>
</comment>
<comment type="subcellular location">
    <subcellularLocation>
        <location evidence="1">Cellular thylakoid membrane</location>
        <topology evidence="1">Peripheral membrane protein</topology>
        <orientation evidence="1">Cytoplasmic side</orientation>
    </subcellularLocation>
</comment>
<comment type="similarity">
    <text evidence="1">Belongs to the complex I NdhM subunit family.</text>
</comment>
<dbReference type="EC" id="7.1.1.-" evidence="1"/>
<dbReference type="EMBL" id="BX569695">
    <property type="protein sequence ID" value="CAE08773.1"/>
    <property type="molecule type" value="Genomic_DNA"/>
</dbReference>
<dbReference type="RefSeq" id="WP_011129111.1">
    <property type="nucleotide sequence ID" value="NC_005070.1"/>
</dbReference>
<dbReference type="SMR" id="Q7U417"/>
<dbReference type="STRING" id="84588.SYNW2258"/>
<dbReference type="KEGG" id="syw:SYNW2258"/>
<dbReference type="eggNOG" id="ENOG5031AQM">
    <property type="taxonomic scope" value="Bacteria"/>
</dbReference>
<dbReference type="HOGENOM" id="CLU_137431_0_0_3"/>
<dbReference type="BioCyc" id="MetaCyc:TX72_RS11390-MONOMER"/>
<dbReference type="Proteomes" id="UP000001422">
    <property type="component" value="Chromosome"/>
</dbReference>
<dbReference type="GO" id="GO:0031676">
    <property type="term" value="C:plasma membrane-derived thylakoid membrane"/>
    <property type="evidence" value="ECO:0007669"/>
    <property type="project" value="UniProtKB-SubCell"/>
</dbReference>
<dbReference type="GO" id="GO:0016655">
    <property type="term" value="F:oxidoreductase activity, acting on NAD(P)H, quinone or similar compound as acceptor"/>
    <property type="evidence" value="ECO:0007669"/>
    <property type="project" value="UniProtKB-UniRule"/>
</dbReference>
<dbReference type="GO" id="GO:0048038">
    <property type="term" value="F:quinone binding"/>
    <property type="evidence" value="ECO:0007669"/>
    <property type="project" value="UniProtKB-KW"/>
</dbReference>
<dbReference type="HAMAP" id="MF_01352">
    <property type="entry name" value="NDH1_NDH1M"/>
    <property type="match status" value="1"/>
</dbReference>
<dbReference type="InterPro" id="IPR018922">
    <property type="entry name" value="NdhM"/>
</dbReference>
<dbReference type="PANTHER" id="PTHR36900">
    <property type="entry name" value="NAD(P)H-QUINONE OXIDOREDUCTASE SUBUNIT M, CHLOROPLASTIC"/>
    <property type="match status" value="1"/>
</dbReference>
<dbReference type="PANTHER" id="PTHR36900:SF1">
    <property type="entry name" value="NAD(P)H-QUINONE OXIDOREDUCTASE SUBUNIT M, CHLOROPLASTIC"/>
    <property type="match status" value="1"/>
</dbReference>
<dbReference type="Pfam" id="PF10664">
    <property type="entry name" value="NdhM"/>
    <property type="match status" value="1"/>
</dbReference>
<feature type="chain" id="PRO_0000352208" description="NAD(P)H-quinone oxidoreductase subunit M">
    <location>
        <begin position="1"/>
        <end position="115"/>
    </location>
</feature>
<gene>
    <name evidence="1" type="primary">ndhM</name>
    <name type="ordered locus">SYNW2258</name>
</gene>
<protein>
    <recommendedName>
        <fullName evidence="1">NAD(P)H-quinone oxidoreductase subunit M</fullName>
        <ecNumber evidence="1">7.1.1.-</ecNumber>
    </recommendedName>
    <alternativeName>
        <fullName evidence="1">NAD(P)H dehydrogenase I subunit M</fullName>
        <shortName evidence="1">NDH-1 subunit M</shortName>
        <shortName evidence="1">NDH-M</shortName>
    </alternativeName>
</protein>
<keyword id="KW-0472">Membrane</keyword>
<keyword id="KW-0520">NAD</keyword>
<keyword id="KW-0521">NADP</keyword>
<keyword id="KW-0618">Plastoquinone</keyword>
<keyword id="KW-0874">Quinone</keyword>
<keyword id="KW-0793">Thylakoid</keyword>
<keyword id="KW-1278">Translocase</keyword>
<keyword id="KW-0813">Transport</keyword>
<reference key="1">
    <citation type="journal article" date="2003" name="Nature">
        <title>The genome of a motile marine Synechococcus.</title>
        <authorList>
            <person name="Palenik B."/>
            <person name="Brahamsha B."/>
            <person name="Larimer F.W."/>
            <person name="Land M.L."/>
            <person name="Hauser L."/>
            <person name="Chain P."/>
            <person name="Lamerdin J.E."/>
            <person name="Regala W."/>
            <person name="Allen E.E."/>
            <person name="McCarren J."/>
            <person name="Paulsen I.T."/>
            <person name="Dufresne A."/>
            <person name="Partensky F."/>
            <person name="Webb E.A."/>
            <person name="Waterbury J."/>
        </authorList>
    </citation>
    <scope>NUCLEOTIDE SEQUENCE [LARGE SCALE GENOMIC DNA]</scope>
    <source>
        <strain>WH8102</strain>
    </source>
</reference>
<sequence>MADTLLKCTTRHVRLFTARVDNQDLVPSADELTLDLDPDNEFLWSDAVVSKVQQRFQQLVEAGAGGELSDYSLRRIGTDLEGYIRQLLQAGELSYNPDGRVQNFSMGLPRTPDLL</sequence>
<proteinExistence type="inferred from homology"/>